<feature type="chain" id="PRO_0000451138" description="Aliphatic nitrilase">
    <location>
        <begin position="1"/>
        <end position="308"/>
    </location>
</feature>
<feature type="domain" description="CN hydrolase" evidence="1">
    <location>
        <begin position="4"/>
        <end position="270"/>
    </location>
</feature>
<feature type="active site" description="Proton acceptor" evidence="1">
    <location>
        <position position="44"/>
    </location>
</feature>
<feature type="active site" evidence="1">
    <location>
        <position position="130"/>
    </location>
</feature>
<feature type="active site" description="Nucleophile" evidence="1">
    <location>
        <position position="164"/>
    </location>
</feature>
<protein>
    <recommendedName>
        <fullName evidence="3">Aliphatic nitrilase</fullName>
        <ecNumber>3.5.5.1</ecNumber>
    </recommendedName>
    <alternativeName>
        <fullName evidence="3">NitSf</fullName>
    </alternativeName>
</protein>
<proteinExistence type="evidence at protein level"/>
<name>NIT_SINF1</name>
<gene>
    <name type="primary">nit</name>
    <name type="ordered locus">SFHH103_06513</name>
</gene>
<comment type="function">
    <text evidence="2">Nitrilase that hydrolyzes preferentially phenylacetonitrile, but not (R,S)-mandelonitrile. Also acts on dinitriles like phenylenediacetonitriles (PDAs) 1,2-PDA, 1,3-PDA, and 1,4-PDA, and cyanophenyl acetonitriles (CPAs) 2-CPA and 4-CPA, but with lower activities.</text>
</comment>
<comment type="catalytic activity">
    <reaction evidence="2">
        <text>a nitrile + 2 H2O = a carboxylate + NH4(+)</text>
        <dbReference type="Rhea" id="RHEA:21724"/>
        <dbReference type="ChEBI" id="CHEBI:15377"/>
        <dbReference type="ChEBI" id="CHEBI:18379"/>
        <dbReference type="ChEBI" id="CHEBI:28938"/>
        <dbReference type="ChEBI" id="CHEBI:29067"/>
        <dbReference type="EC" id="3.5.5.1"/>
    </reaction>
</comment>
<comment type="similarity">
    <text evidence="4">Belongs to the carbon-nitrogen hydrolase superfamily. Nitrilase family.</text>
</comment>
<accession>G9AIU0</accession>
<accession>A0A0P1DJR8</accession>
<sequence length="308" mass="33301">MTKFRAAVVQAAPVPNDVEATIEKTINLIREAAARGANVAVFPEAFIGGYPKGANFNIHIGARTPEGRQEFADYRAGAIAVPGSETEQLAQAAHEAGLYLTIGVIERDGGTLYCTALYFTPDGLAGKHRKLMPTGAERLCWGFGDGSTLDTVQTPWGSMGAVICWENYMPLMRTAMYGKGIALYCAPTADDRDSWAATMRHIALEGRCFVLSACQYLTRKDFPESMGNRITDEPDAVLMRGGAIIVDPLGRVVAGPDYSGETILTADLDTDDIPRAQFDFDVVGHYARPDVFKLVVDEEPKSAVVTRA</sequence>
<keyword id="KW-0378">Hydrolase</keyword>
<keyword id="KW-0614">Plasmid</keyword>
<evidence type="ECO:0000255" key="1">
    <source>
        <dbReference type="PROSITE-ProRule" id="PRU00054"/>
    </source>
</evidence>
<evidence type="ECO:0000269" key="2">
    <source>
    </source>
</evidence>
<evidence type="ECO:0000303" key="3">
    <source>
    </source>
</evidence>
<evidence type="ECO:0000305" key="4"/>
<organism>
    <name type="scientific">Sinorhizobium fredii (strain HH103)</name>
    <dbReference type="NCBI Taxonomy" id="1117943"/>
    <lineage>
        <taxon>Bacteria</taxon>
        <taxon>Pseudomonadati</taxon>
        <taxon>Pseudomonadota</taxon>
        <taxon>Alphaproteobacteria</taxon>
        <taxon>Hyphomicrobiales</taxon>
        <taxon>Rhizobiaceae</taxon>
        <taxon>Sinorhizobium/Ensifer group</taxon>
        <taxon>Sinorhizobium</taxon>
    </lineage>
</organism>
<dbReference type="EC" id="3.5.5.1"/>
<dbReference type="EMBL" id="LN875499">
    <property type="protein sequence ID" value="CTQ87323.1"/>
    <property type="molecule type" value="Genomic_DNA"/>
</dbReference>
<dbReference type="EMBL" id="HE616899">
    <property type="protein sequence ID" value="CCF00972.1"/>
    <property type="molecule type" value="Genomic_DNA"/>
</dbReference>
<dbReference type="RefSeq" id="WP_014332611.1">
    <property type="nucleotide sequence ID" value="NC_016815.1"/>
</dbReference>
<dbReference type="SMR" id="G9AIU0"/>
<dbReference type="KEGG" id="sfh:SFHH103_06513"/>
<dbReference type="PATRIC" id="fig|380.5.peg.6056"/>
<dbReference type="HOGENOM" id="CLU_030130_6_1_5"/>
<dbReference type="Proteomes" id="UP000007735">
    <property type="component" value="Plasmid pSfHH103e"/>
</dbReference>
<dbReference type="GO" id="GO:0000257">
    <property type="term" value="F:nitrilase activity"/>
    <property type="evidence" value="ECO:0007669"/>
    <property type="project" value="UniProtKB-EC"/>
</dbReference>
<dbReference type="GO" id="GO:0018822">
    <property type="term" value="F:nitrile hydratase activity"/>
    <property type="evidence" value="ECO:0007669"/>
    <property type="project" value="TreeGrafter"/>
</dbReference>
<dbReference type="GO" id="GO:0051410">
    <property type="term" value="P:detoxification of nitrogen compound"/>
    <property type="evidence" value="ECO:0007669"/>
    <property type="project" value="TreeGrafter"/>
</dbReference>
<dbReference type="CDD" id="cd07564">
    <property type="entry name" value="nitrilases_CHs"/>
    <property type="match status" value="1"/>
</dbReference>
<dbReference type="Gene3D" id="3.60.110.10">
    <property type="entry name" value="Carbon-nitrogen hydrolase"/>
    <property type="match status" value="1"/>
</dbReference>
<dbReference type="InterPro" id="IPR003010">
    <property type="entry name" value="C-N_Hydrolase"/>
</dbReference>
<dbReference type="InterPro" id="IPR036526">
    <property type="entry name" value="C-N_Hydrolase_sf"/>
</dbReference>
<dbReference type="InterPro" id="IPR000132">
    <property type="entry name" value="Nitrilase/CN_hydratase_CS"/>
</dbReference>
<dbReference type="InterPro" id="IPR044149">
    <property type="entry name" value="Nitrilases_CHs"/>
</dbReference>
<dbReference type="PANTHER" id="PTHR46044:SF1">
    <property type="entry name" value="CN HYDROLASE DOMAIN-CONTAINING PROTEIN"/>
    <property type="match status" value="1"/>
</dbReference>
<dbReference type="PANTHER" id="PTHR46044">
    <property type="entry name" value="NITRILASE"/>
    <property type="match status" value="1"/>
</dbReference>
<dbReference type="Pfam" id="PF00795">
    <property type="entry name" value="CN_hydrolase"/>
    <property type="match status" value="1"/>
</dbReference>
<dbReference type="SUPFAM" id="SSF56317">
    <property type="entry name" value="Carbon-nitrogen hydrolase"/>
    <property type="match status" value="1"/>
</dbReference>
<dbReference type="PROSITE" id="PS50263">
    <property type="entry name" value="CN_HYDROLASE"/>
    <property type="match status" value="1"/>
</dbReference>
<dbReference type="PROSITE" id="PS00921">
    <property type="entry name" value="NITRIL_CHT_2"/>
    <property type="match status" value="1"/>
</dbReference>
<geneLocation type="plasmid">
    <name>pSfHH103e</name>
</geneLocation>
<reference key="1">
    <citation type="journal article" date="2016" name="Appl. Microbiol. Biotechnol.">
        <title>Bringing nitrilase sequences from databases to life: the search for novel substrate specificities with a focus on dinitriles.</title>
        <authorList>
            <person name="Vesela A.B."/>
            <person name="Rucka L."/>
            <person name="Kaplan O."/>
            <person name="Pelantova H."/>
            <person name="Nesvera J."/>
            <person name="Patek M."/>
            <person name="Martinkova L."/>
        </authorList>
    </citation>
    <scope>NUCLEOTIDE SEQUENCE [GENOMIC DNA]</scope>
    <scope>FUNCTION</scope>
    <scope>CATALYTIC ACTIVITY</scope>
</reference>
<reference key="2">
    <citation type="journal article" date="2012" name="J. Bacteriol.">
        <title>Genome sequence of the soybean symbiont Sinorhizobium fredii HH103.</title>
        <authorList>
            <person name="Weidner S."/>
            <person name="Becker A."/>
            <person name="Bonilla I."/>
            <person name="Jaenicke S."/>
            <person name="Lloret J."/>
            <person name="Margaret I."/>
            <person name="Puhler A."/>
            <person name="Ruiz-Sainz J.E."/>
            <person name="Schneiker-Bekel S."/>
            <person name="Szczepanowski R."/>
            <person name="Vinardell J.M."/>
            <person name="Zehner S."/>
            <person name="Gottfert M."/>
        </authorList>
    </citation>
    <scope>NUCLEOTIDE SEQUENCE [LARGE SCALE GENOMIC DNA]</scope>
    <source>
        <strain>HH103</strain>
        <plasmid>pSfHH103e</plasmid>
    </source>
</reference>